<accession>P47595</accession>
<name>Y353_MYCGE</name>
<gene>
    <name type="ordered locus">MG353</name>
</gene>
<dbReference type="EMBL" id="L43967">
    <property type="protein sequence ID" value="AAC71578.1"/>
    <property type="molecule type" value="Genomic_DNA"/>
</dbReference>
<dbReference type="PIR" id="A64239">
    <property type="entry name" value="A64239"/>
</dbReference>
<dbReference type="RefSeq" id="WP_009885811.1">
    <property type="nucleotide sequence ID" value="NC_000908.2"/>
</dbReference>
<dbReference type="SMR" id="P47595"/>
<dbReference type="STRING" id="243273.MG_353"/>
<dbReference type="GeneID" id="88282534"/>
<dbReference type="KEGG" id="mge:MG_353"/>
<dbReference type="eggNOG" id="COG0776">
    <property type="taxonomic scope" value="Bacteria"/>
</dbReference>
<dbReference type="HOGENOM" id="CLU_2180963_0_0_14"/>
<dbReference type="InParanoid" id="P47595"/>
<dbReference type="OrthoDB" id="9891332at2"/>
<dbReference type="BioCyc" id="MGEN243273:G1GJ2-444-MONOMER"/>
<dbReference type="Proteomes" id="UP000000807">
    <property type="component" value="Chromosome"/>
</dbReference>
<dbReference type="GO" id="GO:0003677">
    <property type="term" value="F:DNA binding"/>
    <property type="evidence" value="ECO:0007669"/>
    <property type="project" value="InterPro"/>
</dbReference>
<dbReference type="GO" id="GO:0030527">
    <property type="term" value="F:structural constituent of chromatin"/>
    <property type="evidence" value="ECO:0007669"/>
    <property type="project" value="InterPro"/>
</dbReference>
<dbReference type="Gene3D" id="4.10.520.10">
    <property type="entry name" value="IHF-like DNA-binding proteins"/>
    <property type="match status" value="1"/>
</dbReference>
<dbReference type="InterPro" id="IPR000119">
    <property type="entry name" value="Hist_DNA-bd"/>
</dbReference>
<dbReference type="InterPro" id="IPR010992">
    <property type="entry name" value="IHF-like_DNA-bd_dom_sf"/>
</dbReference>
<dbReference type="Pfam" id="PF00216">
    <property type="entry name" value="Bac_DNA_binding"/>
    <property type="match status" value="1"/>
</dbReference>
<dbReference type="SMART" id="SM00411">
    <property type="entry name" value="BHL"/>
    <property type="match status" value="1"/>
</dbReference>
<dbReference type="SUPFAM" id="SSF47729">
    <property type="entry name" value="IHF-like DNA-binding proteins"/>
    <property type="match status" value="1"/>
</dbReference>
<reference key="1">
    <citation type="journal article" date="1995" name="Science">
        <title>The minimal gene complement of Mycoplasma genitalium.</title>
        <authorList>
            <person name="Fraser C.M."/>
            <person name="Gocayne J.D."/>
            <person name="White O."/>
            <person name="Adams M.D."/>
            <person name="Clayton R.A."/>
            <person name="Fleischmann R.D."/>
            <person name="Bult C.J."/>
            <person name="Kerlavage A.R."/>
            <person name="Sutton G.G."/>
            <person name="Kelley J.M."/>
            <person name="Fritchman J.L."/>
            <person name="Weidman J.F."/>
            <person name="Small K.V."/>
            <person name="Sandusky M."/>
            <person name="Fuhrmann J.L."/>
            <person name="Nguyen D.T."/>
            <person name="Utterback T.R."/>
            <person name="Saudek D.M."/>
            <person name="Phillips C.A."/>
            <person name="Merrick J.M."/>
            <person name="Tomb J.-F."/>
            <person name="Dougherty B.A."/>
            <person name="Bott K.F."/>
            <person name="Hu P.-C."/>
            <person name="Lucier T.S."/>
            <person name="Peterson S.N."/>
            <person name="Smith H.O."/>
            <person name="Hutchison C.A. III"/>
            <person name="Venter J.C."/>
        </authorList>
    </citation>
    <scope>NUCLEOTIDE SEQUENCE [LARGE SCALE GENOMIC DNA]</scope>
    <source>
        <strain>ATCC 33530 / DSM 19775 / NCTC 10195 / G37</strain>
    </source>
</reference>
<protein>
    <recommendedName>
        <fullName>Uncharacterized protein MG353</fullName>
    </recommendedName>
</protein>
<organism>
    <name type="scientific">Mycoplasma genitalium (strain ATCC 33530 / DSM 19775 / NCTC 10195 / G37)</name>
    <name type="common">Mycoplasmoides genitalium</name>
    <dbReference type="NCBI Taxonomy" id="243273"/>
    <lineage>
        <taxon>Bacteria</taxon>
        <taxon>Bacillati</taxon>
        <taxon>Mycoplasmatota</taxon>
        <taxon>Mycoplasmoidales</taxon>
        <taxon>Mycoplasmoidaceae</taxon>
        <taxon>Mycoplasmoides</taxon>
    </lineage>
</organism>
<feature type="chain" id="PRO_0000210559" description="Uncharacterized protein MG353">
    <location>
        <begin position="1"/>
        <end position="109"/>
    </location>
</feature>
<keyword id="KW-1185">Reference proteome</keyword>
<proteinExistence type="predicted"/>
<sequence length="109" mass="12554">MEKTSNTSKPLSRSEINKIIAVATGIKEKKIKEIFKYLNTLLLNELVSRSVCILPENLGKLRITIRNARYQKDMQTGEIRHIPPKPLVRYSPSKTIKETAAKVRWKYAD</sequence>